<evidence type="ECO:0000255" key="1">
    <source>
        <dbReference type="HAMAP-Rule" id="MF_01346"/>
    </source>
</evidence>
<organism>
    <name type="scientific">Streptomyces griseus subsp. griseus (strain JCM 4626 / CBS 651.72 / NBRC 13350 / KCC S-0626 / ISP 5235)</name>
    <dbReference type="NCBI Taxonomy" id="455632"/>
    <lineage>
        <taxon>Bacteria</taxon>
        <taxon>Bacillati</taxon>
        <taxon>Actinomycetota</taxon>
        <taxon>Actinomycetes</taxon>
        <taxon>Kitasatosporales</taxon>
        <taxon>Streptomycetaceae</taxon>
        <taxon>Streptomyces</taxon>
    </lineage>
</organism>
<accession>B1W0A5</accession>
<comment type="function">
    <text evidence="1">Produces ATP from ADP in the presence of a proton gradient across the membrane. The alpha chain is a regulatory subunit.</text>
</comment>
<comment type="catalytic activity">
    <reaction evidence="1">
        <text>ATP + H2O + 4 H(+)(in) = ADP + phosphate + 5 H(+)(out)</text>
        <dbReference type="Rhea" id="RHEA:57720"/>
        <dbReference type="ChEBI" id="CHEBI:15377"/>
        <dbReference type="ChEBI" id="CHEBI:15378"/>
        <dbReference type="ChEBI" id="CHEBI:30616"/>
        <dbReference type="ChEBI" id="CHEBI:43474"/>
        <dbReference type="ChEBI" id="CHEBI:456216"/>
        <dbReference type="EC" id="7.1.2.2"/>
    </reaction>
</comment>
<comment type="subunit">
    <text evidence="1">F-type ATPases have 2 components, CF(1) - the catalytic core - and CF(0) - the membrane proton channel. CF(1) has five subunits: alpha(3), beta(3), gamma(1), delta(1), epsilon(1). CF(0) has three main subunits: a(1), b(2) and c(9-12). The alpha and beta chains form an alternating ring which encloses part of the gamma chain. CF(1) is attached to CF(0) by a central stalk formed by the gamma and epsilon chains, while a peripheral stalk is formed by the delta and b chains.</text>
</comment>
<comment type="subcellular location">
    <subcellularLocation>
        <location evidence="1">Cell membrane</location>
        <topology evidence="1">Peripheral membrane protein</topology>
    </subcellularLocation>
</comment>
<comment type="similarity">
    <text evidence="1">Belongs to the ATPase alpha/beta chains family.</text>
</comment>
<reference key="1">
    <citation type="journal article" date="2008" name="J. Bacteriol.">
        <title>Genome sequence of the streptomycin-producing microorganism Streptomyces griseus IFO 13350.</title>
        <authorList>
            <person name="Ohnishi Y."/>
            <person name="Ishikawa J."/>
            <person name="Hara H."/>
            <person name="Suzuki H."/>
            <person name="Ikenoya M."/>
            <person name="Ikeda H."/>
            <person name="Yamashita A."/>
            <person name="Hattori M."/>
            <person name="Horinouchi S."/>
        </authorList>
    </citation>
    <scope>NUCLEOTIDE SEQUENCE [LARGE SCALE GENOMIC DNA]</scope>
    <source>
        <strain>JCM 4626 / CBS 651.72 / NBRC 13350 / KCC S-0626 / ISP 5235</strain>
    </source>
</reference>
<name>ATPA_STRGG</name>
<proteinExistence type="inferred from homology"/>
<feature type="chain" id="PRO_1000143440" description="ATP synthase subunit alpha">
    <location>
        <begin position="1"/>
        <end position="523"/>
    </location>
</feature>
<feature type="binding site" evidence="1">
    <location>
        <begin position="173"/>
        <end position="180"/>
    </location>
    <ligand>
        <name>ATP</name>
        <dbReference type="ChEBI" id="CHEBI:30616"/>
    </ligand>
</feature>
<feature type="site" description="Required for activity" evidence="1">
    <location>
        <position position="374"/>
    </location>
</feature>
<dbReference type="EC" id="7.1.2.2" evidence="1"/>
<dbReference type="EMBL" id="AP009493">
    <property type="protein sequence ID" value="BAG18994.1"/>
    <property type="molecule type" value="Genomic_DNA"/>
</dbReference>
<dbReference type="RefSeq" id="WP_012379019.1">
    <property type="nucleotide sequence ID" value="NC_010572.1"/>
</dbReference>
<dbReference type="SMR" id="B1W0A5"/>
<dbReference type="KEGG" id="sgr:SGR_2165"/>
<dbReference type="PATRIC" id="fig|455632.4.peg.2200"/>
<dbReference type="eggNOG" id="COG0056">
    <property type="taxonomic scope" value="Bacteria"/>
</dbReference>
<dbReference type="HOGENOM" id="CLU_010091_2_1_11"/>
<dbReference type="Proteomes" id="UP000001685">
    <property type="component" value="Chromosome"/>
</dbReference>
<dbReference type="GO" id="GO:0005886">
    <property type="term" value="C:plasma membrane"/>
    <property type="evidence" value="ECO:0007669"/>
    <property type="project" value="UniProtKB-SubCell"/>
</dbReference>
<dbReference type="GO" id="GO:0045259">
    <property type="term" value="C:proton-transporting ATP synthase complex"/>
    <property type="evidence" value="ECO:0007669"/>
    <property type="project" value="UniProtKB-KW"/>
</dbReference>
<dbReference type="GO" id="GO:0043531">
    <property type="term" value="F:ADP binding"/>
    <property type="evidence" value="ECO:0007669"/>
    <property type="project" value="TreeGrafter"/>
</dbReference>
<dbReference type="GO" id="GO:0005524">
    <property type="term" value="F:ATP binding"/>
    <property type="evidence" value="ECO:0007669"/>
    <property type="project" value="UniProtKB-UniRule"/>
</dbReference>
<dbReference type="GO" id="GO:0046933">
    <property type="term" value="F:proton-transporting ATP synthase activity, rotational mechanism"/>
    <property type="evidence" value="ECO:0007669"/>
    <property type="project" value="UniProtKB-UniRule"/>
</dbReference>
<dbReference type="CDD" id="cd18113">
    <property type="entry name" value="ATP-synt_F1_alpha_C"/>
    <property type="match status" value="1"/>
</dbReference>
<dbReference type="CDD" id="cd18116">
    <property type="entry name" value="ATP-synt_F1_alpha_N"/>
    <property type="match status" value="1"/>
</dbReference>
<dbReference type="CDD" id="cd01132">
    <property type="entry name" value="F1-ATPase_alpha_CD"/>
    <property type="match status" value="1"/>
</dbReference>
<dbReference type="FunFam" id="1.20.150.20:FF:000001">
    <property type="entry name" value="ATP synthase subunit alpha"/>
    <property type="match status" value="1"/>
</dbReference>
<dbReference type="FunFam" id="3.40.50.300:FF:000002">
    <property type="entry name" value="ATP synthase subunit alpha"/>
    <property type="match status" value="1"/>
</dbReference>
<dbReference type="Gene3D" id="2.40.30.20">
    <property type="match status" value="1"/>
</dbReference>
<dbReference type="Gene3D" id="1.20.150.20">
    <property type="entry name" value="ATP synthase alpha/beta chain, C-terminal domain"/>
    <property type="match status" value="1"/>
</dbReference>
<dbReference type="Gene3D" id="3.40.50.300">
    <property type="entry name" value="P-loop containing nucleotide triphosphate hydrolases"/>
    <property type="match status" value="1"/>
</dbReference>
<dbReference type="HAMAP" id="MF_01346">
    <property type="entry name" value="ATP_synth_alpha_bact"/>
    <property type="match status" value="1"/>
</dbReference>
<dbReference type="InterPro" id="IPR023366">
    <property type="entry name" value="ATP_synth_asu-like_sf"/>
</dbReference>
<dbReference type="InterPro" id="IPR000793">
    <property type="entry name" value="ATP_synth_asu_C"/>
</dbReference>
<dbReference type="InterPro" id="IPR038376">
    <property type="entry name" value="ATP_synth_asu_C_sf"/>
</dbReference>
<dbReference type="InterPro" id="IPR033732">
    <property type="entry name" value="ATP_synth_F1_a_nt-bd_dom"/>
</dbReference>
<dbReference type="InterPro" id="IPR005294">
    <property type="entry name" value="ATP_synth_F1_asu"/>
</dbReference>
<dbReference type="InterPro" id="IPR020003">
    <property type="entry name" value="ATPase_a/bsu_AS"/>
</dbReference>
<dbReference type="InterPro" id="IPR004100">
    <property type="entry name" value="ATPase_F1/V1/A1_a/bsu_N"/>
</dbReference>
<dbReference type="InterPro" id="IPR036121">
    <property type="entry name" value="ATPase_F1/V1/A1_a/bsu_N_sf"/>
</dbReference>
<dbReference type="InterPro" id="IPR000194">
    <property type="entry name" value="ATPase_F1/V1/A1_a/bsu_nucl-bd"/>
</dbReference>
<dbReference type="InterPro" id="IPR027417">
    <property type="entry name" value="P-loop_NTPase"/>
</dbReference>
<dbReference type="NCBIfam" id="TIGR00962">
    <property type="entry name" value="atpA"/>
    <property type="match status" value="1"/>
</dbReference>
<dbReference type="NCBIfam" id="NF009884">
    <property type="entry name" value="PRK13343.1"/>
    <property type="match status" value="1"/>
</dbReference>
<dbReference type="PANTHER" id="PTHR48082">
    <property type="entry name" value="ATP SYNTHASE SUBUNIT ALPHA, MITOCHONDRIAL"/>
    <property type="match status" value="1"/>
</dbReference>
<dbReference type="PANTHER" id="PTHR48082:SF2">
    <property type="entry name" value="ATP SYNTHASE SUBUNIT ALPHA, MITOCHONDRIAL"/>
    <property type="match status" value="1"/>
</dbReference>
<dbReference type="Pfam" id="PF00006">
    <property type="entry name" value="ATP-synt_ab"/>
    <property type="match status" value="1"/>
</dbReference>
<dbReference type="Pfam" id="PF00306">
    <property type="entry name" value="ATP-synt_ab_C"/>
    <property type="match status" value="1"/>
</dbReference>
<dbReference type="Pfam" id="PF02874">
    <property type="entry name" value="ATP-synt_ab_N"/>
    <property type="match status" value="1"/>
</dbReference>
<dbReference type="SUPFAM" id="SSF47917">
    <property type="entry name" value="C-terminal domain of alpha and beta subunits of F1 ATP synthase"/>
    <property type="match status" value="1"/>
</dbReference>
<dbReference type="SUPFAM" id="SSF50615">
    <property type="entry name" value="N-terminal domain of alpha and beta subunits of F1 ATP synthase"/>
    <property type="match status" value="1"/>
</dbReference>
<dbReference type="SUPFAM" id="SSF52540">
    <property type="entry name" value="P-loop containing nucleoside triphosphate hydrolases"/>
    <property type="match status" value="1"/>
</dbReference>
<dbReference type="PROSITE" id="PS00152">
    <property type="entry name" value="ATPASE_ALPHA_BETA"/>
    <property type="match status" value="1"/>
</dbReference>
<keyword id="KW-0066">ATP synthesis</keyword>
<keyword id="KW-0067">ATP-binding</keyword>
<keyword id="KW-1003">Cell membrane</keyword>
<keyword id="KW-0139">CF(1)</keyword>
<keyword id="KW-0375">Hydrogen ion transport</keyword>
<keyword id="KW-0406">Ion transport</keyword>
<keyword id="KW-0472">Membrane</keyword>
<keyword id="KW-0547">Nucleotide-binding</keyword>
<keyword id="KW-1278">Translocase</keyword>
<keyword id="KW-0813">Transport</keyword>
<gene>
    <name evidence="1" type="primary">atpA</name>
    <name type="ordered locus">SGR_2165</name>
</gene>
<protein>
    <recommendedName>
        <fullName evidence="1">ATP synthase subunit alpha</fullName>
        <ecNumber evidence="1">7.1.2.2</ecNumber>
    </recommendedName>
    <alternativeName>
        <fullName evidence="1">ATP synthase F1 sector subunit alpha</fullName>
    </alternativeName>
    <alternativeName>
        <fullName evidence="1">F-ATPase subunit alpha</fullName>
    </alternativeName>
</protein>
<sequence>MAELTIRPEEIRDALDNFVQSYQPDAASREEVGTVSVAGDGIAKVEGLPSAMANELLKFEDGTLGLALNLEEREIGAIVLGEFSGIEEGQPVQRTGEVLSVGVGEGYLGRVVDPLGNPIDGLGEIATESRRALELQAPGVMVRKSVHEPMQTGYKAVDAMVPIGRGQRQLIIGDRQTGKTALAVDTIINQRDNWRSGDVNKQVRCIYVAIGQKGSTIASVRGALEEAGALEYTTIVAAPASDPAGFKYLAPYTGSAIGQHWMYDGKHVLIIFDDLSKQADAYRAVSLLLRRPPGREAYPGDVFYLHSRLLERCAKLSDEMGAGSMTGLPIVETKANDVSAFIPTNVISITDGQCFLESDLFNAGQRPALNVGISVSRVGGSAQHKAMKQVSGRLRVDLAQFRELEAFAAFGSDLDAASKASLERGKRMVELLKQPQYAPFPMEEQVVSVWAGTTGKMDDVPVEDIRRFEAELLEFLRRERKDLLTSIAEGGKMSDDTLQSVADAIAAFKQQFETSDGKLLGEG</sequence>